<gene>
    <name evidence="1" type="primary">rplM</name>
    <name type="ordered locus">WRi_000580</name>
</gene>
<dbReference type="EMBL" id="CP001391">
    <property type="protein sequence ID" value="ACN94921.1"/>
    <property type="molecule type" value="Genomic_DNA"/>
</dbReference>
<dbReference type="RefSeq" id="WP_010082596.1">
    <property type="nucleotide sequence ID" value="NZ_MKIF01000181.1"/>
</dbReference>
<dbReference type="SMR" id="C0R579"/>
<dbReference type="STRING" id="66084.WRi_000580"/>
<dbReference type="KEGG" id="wri:WRi_000580"/>
<dbReference type="HOGENOM" id="CLU_082184_2_2_5"/>
<dbReference type="Proteomes" id="UP000001293">
    <property type="component" value="Chromosome"/>
</dbReference>
<dbReference type="GO" id="GO:0022625">
    <property type="term" value="C:cytosolic large ribosomal subunit"/>
    <property type="evidence" value="ECO:0007669"/>
    <property type="project" value="TreeGrafter"/>
</dbReference>
<dbReference type="GO" id="GO:0003729">
    <property type="term" value="F:mRNA binding"/>
    <property type="evidence" value="ECO:0007669"/>
    <property type="project" value="TreeGrafter"/>
</dbReference>
<dbReference type="GO" id="GO:0003735">
    <property type="term" value="F:structural constituent of ribosome"/>
    <property type="evidence" value="ECO:0007669"/>
    <property type="project" value="InterPro"/>
</dbReference>
<dbReference type="GO" id="GO:0017148">
    <property type="term" value="P:negative regulation of translation"/>
    <property type="evidence" value="ECO:0007669"/>
    <property type="project" value="TreeGrafter"/>
</dbReference>
<dbReference type="GO" id="GO:0006412">
    <property type="term" value="P:translation"/>
    <property type="evidence" value="ECO:0007669"/>
    <property type="project" value="UniProtKB-UniRule"/>
</dbReference>
<dbReference type="CDD" id="cd00392">
    <property type="entry name" value="Ribosomal_L13"/>
    <property type="match status" value="1"/>
</dbReference>
<dbReference type="FunFam" id="3.90.1180.10:FF:000001">
    <property type="entry name" value="50S ribosomal protein L13"/>
    <property type="match status" value="1"/>
</dbReference>
<dbReference type="Gene3D" id="3.90.1180.10">
    <property type="entry name" value="Ribosomal protein L13"/>
    <property type="match status" value="1"/>
</dbReference>
<dbReference type="HAMAP" id="MF_01366">
    <property type="entry name" value="Ribosomal_uL13"/>
    <property type="match status" value="1"/>
</dbReference>
<dbReference type="InterPro" id="IPR005822">
    <property type="entry name" value="Ribosomal_uL13"/>
</dbReference>
<dbReference type="InterPro" id="IPR005823">
    <property type="entry name" value="Ribosomal_uL13_bac-type"/>
</dbReference>
<dbReference type="InterPro" id="IPR036899">
    <property type="entry name" value="Ribosomal_uL13_sf"/>
</dbReference>
<dbReference type="NCBIfam" id="TIGR01066">
    <property type="entry name" value="rplM_bact"/>
    <property type="match status" value="1"/>
</dbReference>
<dbReference type="PANTHER" id="PTHR11545:SF2">
    <property type="entry name" value="LARGE RIBOSOMAL SUBUNIT PROTEIN UL13M"/>
    <property type="match status" value="1"/>
</dbReference>
<dbReference type="PANTHER" id="PTHR11545">
    <property type="entry name" value="RIBOSOMAL PROTEIN L13"/>
    <property type="match status" value="1"/>
</dbReference>
<dbReference type="Pfam" id="PF00572">
    <property type="entry name" value="Ribosomal_L13"/>
    <property type="match status" value="1"/>
</dbReference>
<dbReference type="PIRSF" id="PIRSF002181">
    <property type="entry name" value="Ribosomal_L13"/>
    <property type="match status" value="1"/>
</dbReference>
<dbReference type="SUPFAM" id="SSF52161">
    <property type="entry name" value="Ribosomal protein L13"/>
    <property type="match status" value="1"/>
</dbReference>
<accession>C0R579</accession>
<evidence type="ECO:0000255" key="1">
    <source>
        <dbReference type="HAMAP-Rule" id="MF_01366"/>
    </source>
</evidence>
<evidence type="ECO:0000305" key="2"/>
<organism>
    <name type="scientific">Wolbachia sp. subsp. Drosophila simulans (strain wRi)</name>
    <dbReference type="NCBI Taxonomy" id="66084"/>
    <lineage>
        <taxon>Bacteria</taxon>
        <taxon>Pseudomonadati</taxon>
        <taxon>Pseudomonadota</taxon>
        <taxon>Alphaproteobacteria</taxon>
        <taxon>Rickettsiales</taxon>
        <taxon>Anaplasmataceae</taxon>
        <taxon>Wolbachieae</taxon>
        <taxon>Wolbachia</taxon>
    </lineage>
</organism>
<proteinExistence type="inferred from homology"/>
<keyword id="KW-0687">Ribonucleoprotein</keyword>
<keyword id="KW-0689">Ribosomal protein</keyword>
<name>RL13_WOLWR</name>
<sequence length="152" mass="17567">MKTFFLKEKQINKKWFVIDAEGLVVGRLAAFVATLLRGKHKPEYTPHMDCGDNVIIINAEKVHFTGKKLKDKIYYKHTGYSGGLKKTTPDNILNGKFPERVIEMAVKRMLDDGPMARRRFENLYVYSGSEHKHQGQQPEKIDFASLNRKNKK</sequence>
<protein>
    <recommendedName>
        <fullName evidence="1">Large ribosomal subunit protein uL13</fullName>
    </recommendedName>
    <alternativeName>
        <fullName evidence="2">50S ribosomal protein L13</fullName>
    </alternativeName>
</protein>
<reference key="1">
    <citation type="journal article" date="2009" name="Proc. Natl. Acad. Sci. U.S.A.">
        <title>The mosaic genome structure of the Wolbachia wRi strain infecting Drosophila simulans.</title>
        <authorList>
            <person name="Klasson L."/>
            <person name="Westberg J."/>
            <person name="Sapountzis P."/>
            <person name="Naeslund K."/>
            <person name="Lutnaes Y."/>
            <person name="Darby A.C."/>
            <person name="Veneti Z."/>
            <person name="Chen L."/>
            <person name="Braig H.R."/>
            <person name="Garrett R."/>
            <person name="Bourtzis K."/>
            <person name="Andersson S.G."/>
        </authorList>
    </citation>
    <scope>NUCLEOTIDE SEQUENCE [LARGE SCALE GENOMIC DNA]</scope>
    <source>
        <strain>wRi</strain>
    </source>
</reference>
<comment type="function">
    <text evidence="1">This protein is one of the early assembly proteins of the 50S ribosomal subunit, although it is not seen to bind rRNA by itself. It is important during the early stages of 50S assembly.</text>
</comment>
<comment type="subunit">
    <text evidence="1">Part of the 50S ribosomal subunit.</text>
</comment>
<comment type="similarity">
    <text evidence="1">Belongs to the universal ribosomal protein uL13 family.</text>
</comment>
<feature type="chain" id="PRO_1000166888" description="Large ribosomal subunit protein uL13">
    <location>
        <begin position="1"/>
        <end position="152"/>
    </location>
</feature>